<organism>
    <name type="scientific">Mus musculus</name>
    <name type="common">Mouse</name>
    <dbReference type="NCBI Taxonomy" id="10090"/>
    <lineage>
        <taxon>Eukaryota</taxon>
        <taxon>Metazoa</taxon>
        <taxon>Chordata</taxon>
        <taxon>Craniata</taxon>
        <taxon>Vertebrata</taxon>
        <taxon>Euteleostomi</taxon>
        <taxon>Mammalia</taxon>
        <taxon>Eutheria</taxon>
        <taxon>Euarchontoglires</taxon>
        <taxon>Glires</taxon>
        <taxon>Rodentia</taxon>
        <taxon>Myomorpha</taxon>
        <taxon>Muroidea</taxon>
        <taxon>Muridae</taxon>
        <taxon>Murinae</taxon>
        <taxon>Mus</taxon>
        <taxon>Mus</taxon>
    </lineage>
</organism>
<name>APCL_MOUSE</name>
<protein>
    <recommendedName>
        <fullName>Adenomatous polyposis coli protein 2</fullName>
    </recommendedName>
</protein>
<dbReference type="EMBL" id="AJ130783">
    <property type="protein sequence ID" value="CAA10207.1"/>
    <property type="molecule type" value="Genomic_DNA"/>
</dbReference>
<dbReference type="EMBL" id="AJ130784">
    <property type="protein sequence ID" value="CAA10207.1"/>
    <property type="status" value="JOINED"/>
    <property type="molecule type" value="Genomic_DNA"/>
</dbReference>
<dbReference type="EMBL" id="AJ130785">
    <property type="protein sequence ID" value="CAA10207.1"/>
    <property type="status" value="JOINED"/>
    <property type="molecule type" value="Genomic_DNA"/>
</dbReference>
<dbReference type="EMBL" id="AJ130786">
    <property type="protein sequence ID" value="CAA10207.1"/>
    <property type="status" value="JOINED"/>
    <property type="molecule type" value="Genomic_DNA"/>
</dbReference>
<dbReference type="EMBL" id="AJ130787">
    <property type="protein sequence ID" value="CAA10207.1"/>
    <property type="status" value="JOINED"/>
    <property type="molecule type" value="Genomic_DNA"/>
</dbReference>
<dbReference type="EMBL" id="AJ130788">
    <property type="protein sequence ID" value="CAA10207.1"/>
    <property type="status" value="JOINED"/>
    <property type="molecule type" value="Genomic_DNA"/>
</dbReference>
<dbReference type="EMBL" id="AJ130789">
    <property type="protein sequence ID" value="CAA10207.1"/>
    <property type="status" value="JOINED"/>
    <property type="molecule type" value="Genomic_DNA"/>
</dbReference>
<dbReference type="EMBL" id="AJ130790">
    <property type="protein sequence ID" value="CAA10207.1"/>
    <property type="status" value="JOINED"/>
    <property type="molecule type" value="Genomic_DNA"/>
</dbReference>
<dbReference type="EMBL" id="AJ130791">
    <property type="protein sequence ID" value="CAA10207.1"/>
    <property type="status" value="JOINED"/>
    <property type="molecule type" value="Genomic_DNA"/>
</dbReference>
<dbReference type="EMBL" id="AJ130792">
    <property type="protein sequence ID" value="CAA10207.1"/>
    <property type="status" value="JOINED"/>
    <property type="molecule type" value="Genomic_DNA"/>
</dbReference>
<dbReference type="EMBL" id="AJ130793">
    <property type="protein sequence ID" value="CAA10207.1"/>
    <property type="status" value="JOINED"/>
    <property type="molecule type" value="Genomic_DNA"/>
</dbReference>
<dbReference type="EMBL" id="AJ130794">
    <property type="protein sequence ID" value="CAA10207.1"/>
    <property type="status" value="JOINED"/>
    <property type="molecule type" value="Genomic_DNA"/>
</dbReference>
<dbReference type="EMBL" id="AJ130795">
    <property type="protein sequence ID" value="CAA10207.1"/>
    <property type="status" value="JOINED"/>
    <property type="molecule type" value="Genomic_DNA"/>
</dbReference>
<dbReference type="EMBL" id="AJ130796">
    <property type="protein sequence ID" value="CAA10207.1"/>
    <property type="status" value="JOINED"/>
    <property type="molecule type" value="Genomic_DNA"/>
</dbReference>
<dbReference type="CCDS" id="CCDS24016.1"/>
<dbReference type="PIR" id="T30258">
    <property type="entry name" value="T30258"/>
</dbReference>
<dbReference type="SMR" id="Q9Z1K7"/>
<dbReference type="ComplexPortal" id="CPX-448">
    <property type="entry name" value="Beta-catenin destruction core complex, Apc2-Axin1-Gsk3b variant"/>
</dbReference>
<dbReference type="ComplexPortal" id="CPX-452">
    <property type="entry name" value="Beta-catenin destruction core complex, Apc2-Axin2-Gsk3b"/>
</dbReference>
<dbReference type="ComplexPortal" id="CPX-456">
    <property type="entry name" value="Beta-catenin destruction core complex, Apc2-Axin1-Gsk3a variant"/>
</dbReference>
<dbReference type="ComplexPortal" id="CPX-458">
    <property type="entry name" value="Beta-catenin destruction core complex, Apc2-Axin2-Gsk3a variant"/>
</dbReference>
<dbReference type="FunCoup" id="Q9Z1K7">
    <property type="interactions" value="162"/>
</dbReference>
<dbReference type="IntAct" id="Q9Z1K7">
    <property type="interactions" value="1"/>
</dbReference>
<dbReference type="STRING" id="10090.ENSMUSP00000020349"/>
<dbReference type="GlyGen" id="Q9Z1K7">
    <property type="glycosylation" value="8 sites, 4 N-linked glycans (4 sites), 1 O-linked glycan (1 site)"/>
</dbReference>
<dbReference type="iPTMnet" id="Q9Z1K7"/>
<dbReference type="PhosphoSitePlus" id="Q9Z1K7"/>
<dbReference type="jPOST" id="Q9Z1K7"/>
<dbReference type="PaxDb" id="10090-ENSMUSP00000100996"/>
<dbReference type="ProteomicsDB" id="296370"/>
<dbReference type="AGR" id="MGI:1346052"/>
<dbReference type="MGI" id="MGI:1346052">
    <property type="gene designation" value="Apc2"/>
</dbReference>
<dbReference type="eggNOG" id="KOG2122">
    <property type="taxonomic scope" value="Eukaryota"/>
</dbReference>
<dbReference type="InParanoid" id="Q9Z1K7"/>
<dbReference type="PhylomeDB" id="Q9Z1K7"/>
<dbReference type="ChiTaRS" id="Apc2">
    <property type="organism name" value="mouse"/>
</dbReference>
<dbReference type="PRO" id="PR:Q9Z1K7"/>
<dbReference type="Proteomes" id="UP000000589">
    <property type="component" value="Unplaced"/>
</dbReference>
<dbReference type="RNAct" id="Q9Z1K7">
    <property type="molecule type" value="protein"/>
</dbReference>
<dbReference type="GO" id="GO:0030877">
    <property type="term" value="C:beta-catenin destruction complex"/>
    <property type="evidence" value="ECO:0000303"/>
    <property type="project" value="ComplexPortal"/>
</dbReference>
<dbReference type="GO" id="GO:0016342">
    <property type="term" value="C:catenin complex"/>
    <property type="evidence" value="ECO:0000266"/>
    <property type="project" value="MGI"/>
</dbReference>
<dbReference type="GO" id="GO:0005794">
    <property type="term" value="C:Golgi apparatus"/>
    <property type="evidence" value="ECO:0007669"/>
    <property type="project" value="UniProtKB-SubCell"/>
</dbReference>
<dbReference type="GO" id="GO:0005874">
    <property type="term" value="C:microtubule"/>
    <property type="evidence" value="ECO:0007669"/>
    <property type="project" value="UniProtKB-KW"/>
</dbReference>
<dbReference type="GO" id="GO:0048471">
    <property type="term" value="C:perinuclear region of cytoplasm"/>
    <property type="evidence" value="ECO:0007669"/>
    <property type="project" value="UniProtKB-SubCell"/>
</dbReference>
<dbReference type="GO" id="GO:0008013">
    <property type="term" value="F:beta-catenin binding"/>
    <property type="evidence" value="ECO:0000266"/>
    <property type="project" value="MGI"/>
</dbReference>
<dbReference type="GO" id="GO:0008017">
    <property type="term" value="F:microtubule binding"/>
    <property type="evidence" value="ECO:0007669"/>
    <property type="project" value="InterPro"/>
</dbReference>
<dbReference type="GO" id="GO:0090630">
    <property type="term" value="P:activation of GTPase activity"/>
    <property type="evidence" value="ECO:0000250"/>
    <property type="project" value="UniProtKB"/>
</dbReference>
<dbReference type="GO" id="GO:0000226">
    <property type="term" value="P:microtubule cytoskeleton organization"/>
    <property type="evidence" value="ECO:0000250"/>
    <property type="project" value="UniProtKB"/>
</dbReference>
<dbReference type="GO" id="GO:0030178">
    <property type="term" value="P:negative regulation of Wnt signaling pathway"/>
    <property type="evidence" value="ECO:0007669"/>
    <property type="project" value="InterPro"/>
</dbReference>
<dbReference type="GO" id="GO:0043161">
    <property type="term" value="P:proteasome-mediated ubiquitin-dependent protein catabolic process"/>
    <property type="evidence" value="ECO:0000303"/>
    <property type="project" value="ComplexPortal"/>
</dbReference>
<dbReference type="GO" id="GO:0016055">
    <property type="term" value="P:Wnt signaling pathway"/>
    <property type="evidence" value="ECO:0007669"/>
    <property type="project" value="UniProtKB-KW"/>
</dbReference>
<dbReference type="FunFam" id="1.20.5.10:FF:000003">
    <property type="entry name" value="Adenomatous polyposis coli protein 2"/>
    <property type="match status" value="1"/>
</dbReference>
<dbReference type="FunFam" id="1.10.287.450:FF:000002">
    <property type="entry name" value="adenomatous polyposis coli protein 2"/>
    <property type="match status" value="1"/>
</dbReference>
<dbReference type="FunFam" id="1.25.10.10:FF:000035">
    <property type="entry name" value="adenomatous polyposis coli protein 2"/>
    <property type="match status" value="1"/>
</dbReference>
<dbReference type="Gene3D" id="1.20.5.10">
    <property type="match status" value="1"/>
</dbReference>
<dbReference type="Gene3D" id="1.10.287.450">
    <property type="entry name" value="Helix hairpin bin"/>
    <property type="match status" value="1"/>
</dbReference>
<dbReference type="Gene3D" id="1.25.10.10">
    <property type="entry name" value="Leucine-rich Repeat Variant"/>
    <property type="match status" value="1"/>
</dbReference>
<dbReference type="InterPro" id="IPR009234">
    <property type="entry name" value="APC_basic_dom"/>
</dbReference>
<dbReference type="InterPro" id="IPR026831">
    <property type="entry name" value="APC_dom"/>
</dbReference>
<dbReference type="InterPro" id="IPR026818">
    <property type="entry name" value="Apc_fam"/>
</dbReference>
<dbReference type="InterPro" id="IPR032038">
    <property type="entry name" value="APC_N"/>
</dbReference>
<dbReference type="InterPro" id="IPR036149">
    <property type="entry name" value="APC_N_sf"/>
</dbReference>
<dbReference type="InterPro" id="IPR041257">
    <property type="entry name" value="APC_rep"/>
</dbReference>
<dbReference type="InterPro" id="IPR009223">
    <property type="entry name" value="APC_rpt"/>
</dbReference>
<dbReference type="InterPro" id="IPR011989">
    <property type="entry name" value="ARM-like"/>
</dbReference>
<dbReference type="InterPro" id="IPR016024">
    <property type="entry name" value="ARM-type_fold"/>
</dbReference>
<dbReference type="InterPro" id="IPR000225">
    <property type="entry name" value="Armadillo"/>
</dbReference>
<dbReference type="InterPro" id="IPR009224">
    <property type="entry name" value="SAMP"/>
</dbReference>
<dbReference type="PANTHER" id="PTHR12607:SF3">
    <property type="entry name" value="ADENOMATOUS POLYPOSIS COLI PROTEIN 2"/>
    <property type="match status" value="1"/>
</dbReference>
<dbReference type="PANTHER" id="PTHR12607">
    <property type="entry name" value="ADENOMATOUS POLYPOSIS COLI PROTEIN FAMILY"/>
    <property type="match status" value="1"/>
</dbReference>
<dbReference type="Pfam" id="PF05956">
    <property type="entry name" value="APC_basic"/>
    <property type="match status" value="1"/>
</dbReference>
<dbReference type="Pfam" id="PF16689">
    <property type="entry name" value="APC_N_CC"/>
    <property type="match status" value="1"/>
</dbReference>
<dbReference type="Pfam" id="PF05923">
    <property type="entry name" value="APC_r"/>
    <property type="match status" value="3"/>
</dbReference>
<dbReference type="Pfam" id="PF18797">
    <property type="entry name" value="APC_rep"/>
    <property type="match status" value="1"/>
</dbReference>
<dbReference type="Pfam" id="PF00514">
    <property type="entry name" value="Arm"/>
    <property type="match status" value="1"/>
</dbReference>
<dbReference type="Pfam" id="PF16629">
    <property type="entry name" value="Arm_APC_u3"/>
    <property type="match status" value="1"/>
</dbReference>
<dbReference type="Pfam" id="PF05924">
    <property type="entry name" value="SAMP"/>
    <property type="match status" value="1"/>
</dbReference>
<dbReference type="Pfam" id="PF11414">
    <property type="entry name" value="Suppressor_APC"/>
    <property type="match status" value="1"/>
</dbReference>
<dbReference type="SMART" id="SM00185">
    <property type="entry name" value="ARM"/>
    <property type="match status" value="7"/>
</dbReference>
<dbReference type="SUPFAM" id="SSF48371">
    <property type="entry name" value="ARM repeat"/>
    <property type="match status" value="1"/>
</dbReference>
<dbReference type="SUPFAM" id="SSF58050">
    <property type="entry name" value="N-terminal coiled coil domain from apc"/>
    <property type="match status" value="1"/>
</dbReference>
<dbReference type="SUPFAM" id="SSF82931">
    <property type="entry name" value="Tumor suppressor gene product Apc"/>
    <property type="match status" value="1"/>
</dbReference>
<proteinExistence type="evidence at protein level"/>
<comment type="function">
    <text evidence="2">Stabilizes microtubules and may regulate actin fiber dynamics through the activation of Rho family GTPases. May also function in Wnt signaling by promoting the rapid degradation of CTNNB1.</text>
</comment>
<comment type="subunit">
    <text evidence="2 6">Interacts with PSRC1 (PubMed:17310996). Interacts with MAPRE3 (PubMed:17310996). Interacts with APC, CTNNB1, TP53BP2, MAPRE1 and possibly with AXIN2 (By similarity).</text>
</comment>
<comment type="subcellular location">
    <subcellularLocation>
        <location evidence="2">Cytoplasm</location>
        <location evidence="2">Cytoskeleton</location>
    </subcellularLocation>
    <subcellularLocation>
        <location evidence="2">Golgi apparatus</location>
    </subcellularLocation>
    <subcellularLocation>
        <location evidence="2">Cytoplasm</location>
    </subcellularLocation>
    <subcellularLocation>
        <location evidence="2">Cytoplasm</location>
        <location evidence="2">Perinuclear region</location>
    </subcellularLocation>
    <text evidence="2">Associated with actin filaments. Associated with microtubule network.</text>
</comment>
<comment type="tissue specificity">
    <text evidence="5">Expressed in brain and other neural tissues.</text>
</comment>
<comment type="developmental stage">
    <text evidence="5">Strongly expressed in fetal brain but expression decreases from P12 onward. Expressed in postmitotic neurons.</text>
</comment>
<comment type="disruption phenotype">
    <text evidence="7">Mice display abnormal head shape with shortened skull length and no change in the skull height. Brain ventricles of these mice are significantly larger and the thickness of the corpus callosum is significantly reduced. They show increased exploratory activity and have impaired learning memory function.</text>
</comment>
<comment type="similarity">
    <text evidence="8">Belongs to the adenomatous polyposis coli (APC) family.</text>
</comment>
<reference key="1">
    <citation type="journal article" date="1999" name="Curr. Biol.">
        <title>Identification of APC2, a homologue of the adenomatous polyposis coli tumour suppressor.</title>
        <authorList>
            <person name="van Es J.H."/>
            <person name="Kirkpatrick C."/>
            <person name="van de Wetering M."/>
            <person name="Molenaar M."/>
            <person name="Miles A."/>
            <person name="Kuipers J."/>
            <person name="Destree O."/>
            <person name="Peifer M."/>
            <person name="Clevers H."/>
        </authorList>
    </citation>
    <scope>NUCLEOTIDE SEQUENCE [GENOMIC DNA]</scope>
</reference>
<reference key="2">
    <citation type="journal article" date="2002" name="Gene Expr. Patterns">
        <title>Expression of Apc2 during mouse development.</title>
        <authorList>
            <person name="Yamanaka H."/>
            <person name="Hashimoto N."/>
            <person name="Koyama K."/>
            <person name="Nakagawa H."/>
            <person name="Nakamura Y."/>
            <person name="Noguchi K."/>
        </authorList>
    </citation>
    <scope>TISSUE SPECIFICITY</scope>
    <scope>DEVELOPMENTAL STAGE</scope>
</reference>
<reference key="3">
    <citation type="journal article" date="2007" name="Oncogene">
        <title>p53 downstream target DDA3 is a novel microtubule-associated protein that interacts with end-binding protein EB3 and activates beta-catenin pathway.</title>
        <authorList>
            <person name="Hsieh P.-C."/>
            <person name="Chang J.-C."/>
            <person name="Sun W.-T."/>
            <person name="Hsieh S.-C."/>
            <person name="Wang M.-C."/>
            <person name="Wang F.-F."/>
        </authorList>
    </citation>
    <scope>INTERACTION WITH PSRC1 AND MAPRE3</scope>
</reference>
<reference key="4">
    <citation type="journal article" date="2010" name="Cell">
        <title>A tissue-specific atlas of mouse protein phosphorylation and expression.</title>
        <authorList>
            <person name="Huttlin E.L."/>
            <person name="Jedrychowski M.P."/>
            <person name="Elias J.E."/>
            <person name="Goswami T."/>
            <person name="Rad R."/>
            <person name="Beausoleil S.A."/>
            <person name="Villen J."/>
            <person name="Haas W."/>
            <person name="Sowa M.E."/>
            <person name="Gygi S.P."/>
        </authorList>
    </citation>
    <scope>PHOSPHORYLATION [LARGE SCALE ANALYSIS] AT SER-1563; SER-1565 AND SER-1861</scope>
    <scope>IDENTIFICATION BY MASS SPECTROMETRY [LARGE SCALE ANALYSIS]</scope>
    <source>
        <tissue>Brain</tissue>
    </source>
</reference>
<reference key="5">
    <citation type="journal article" date="2015" name="Cell Rep.">
        <title>Loss-of-function mutation in APC2 causes Sotos syndrome features.</title>
        <authorList>
            <person name="Almuriekhi M."/>
            <person name="Shintani T."/>
            <person name="Fahiminiya S."/>
            <person name="Fujikawa A."/>
            <person name="Kuboyama K."/>
            <person name="Takeuchi Y."/>
            <person name="Nawaz Z."/>
            <person name="Nadaf J."/>
            <person name="Kamel H."/>
            <person name="Kitam A.K."/>
            <person name="Samiha Z."/>
            <person name="Mahmoud L."/>
            <person name="Ben-Omran T."/>
            <person name="Majewski J."/>
            <person name="Noda M."/>
        </authorList>
    </citation>
    <scope>DISRUPTION PHENOTYPE</scope>
</reference>
<sequence>MTSSMASYEQLVRQVEALKAENTHLRQELRDNSSHLSKLETETSGMKEVLKHLQGKLEQEARVLVSSGQTEVLEQLKALQTDISSLYNLKFHAPALGPEPAARTPEGSPVHGSGPSKDSFGELSRATIRLLEELDQERCFLLSEIEKEEKEKLWYYSQLQGLSKRLDELPHVDTFSMQMDLIRQQLEFEAQHIRSLMEERFGTSDEMVQRAQIRASRLEQIDKELLEAQDRVQQTEPQALLAVKPVAVEEEQEAEVPTHPEDGTPQPGNSKVEVVFWLLSMLATRDQEDTARTLLAMSSSPESCVAMRRSGCLPLLLQILHGTEAGSVGRAGIPGAPGAKDARMRANAALHNIVFSQPDQGLARKEMRVLHVLEQIRAYCETCWDWLQARDSGTETPVPIEPQICQATCAVMKLSFDEEYRRAMNELGGLQAVAELLQVDYEMHKMTRDPLNLALRRYAGMTLTNLTFGDVANKATLCARRGCMEAIVAQLGSESEELHQVVSSILRNLSWRADINSKKVLREVGSMTALMECVLRASKESTLKSVLSALWNLSAHSTENKAAICQVDGALGFLVSTLTYRCQGNSLAVIESGGGILRNVSSLIATREDYRQVLRDHNCLQTLLQHLTSHSLTIVSNACGTLWNLSARSPRDQELLWDLGAVGMLRNLVHSKHKMIAMGSAAALRNLLAHRPAKYQAAAMAVSPGTCVPSLYVRKQRALEAELDTRHLVHALGHLEKQSLPEAETTSKKPLPPLRHLDGLVQDYASDSGCFDDDDAPSLAAAATTAEPASPAVMSMFLGGPFLQGQALARTPPARQGGLEAEKEAGGEAAVAAKAKAKLALAVARIDRLVEDISALHTSSDDSFSLSSGDPGQEAPREGRAQSCSPCRGTEGGRREAGSRAHPLLRLKAAHTSLSNDSLNSGSTSDGYCTREHMTPCPLAALAEHRDDPVRGQTRPRRLDLDLPSRAELPARDTAATDARVRTIKLSPTYQHVPLLDGAAGAGVRPLVGPGTSPGARKQAWIPADSLSKVPEKLVASPLPIASKVLQKLVAQDGPMSLSRCSSLSSLSSTGHAVPSQAENLDSDSSLEGLEEAGPGEAELGRAWRASGSTSLPVSIPAPQRGRSRGLGVEDATPSSSSENCVQETPLVLSRCSSVSSLGSFESRSIASSIPSDPCSGLGSGTVSPSELPDSPGQTMPPSRSKTPPAPPGQPETSQFSLQWESYVKRFLDIADCRERCQPPSELDAGSVRFTVEKPDENFSCASSLSALALHELYVQQDVELRLRPPACPERAVGGGGHRRRDEAASRLDGPAPAGSRARSATDKELEALRECLGAAMPARLRKVASALVPGRRSLPVPVYMLVPAPARGDDSGTDSAEGTPVNFSSAASLSDETLQGPSRDKPAGPGDRQKPTGRAAPARQTRSHRPKAAGAGKSTEHTRGPCRNRAGLELPLSRPQSARSNRDSSCQTRTRGDGALQSLCLTTPTEEAVYCFYDSDEEPPATAPPPRRASAIPRALKREKPAGRKETPSRAAQPATLPVRAQPRLIVDETPPCYSLTSSASSLSEPEAPEQPANHARGPEQGSKQDSSPSPRAEEELLQRCISLAMPRRRTQVPGSRRRKPRALRSDIRPTEITQKCQEEVAGSDPASDLDSVEWQAIQEGANSIVTWLHQAAAKASLEASSESDSLLSLVSGVSAGSTLQPSKLRKGRKPAAEAGGAWRPEKRGTTSTKINGSPRLPNGPEKAKGTQKMMAGESTMLRGRTVIYSAGPASRTQSKGISGPCTTPKKTGTSGTTQPETVTKAPSPEQQRSRSLHRPGKISELAALRHPPRSATPPARLAKTPSSSSSQTSPASQPLPRRSPLATPTGGPLPGPGGSLVPKSPARALLAKQHKTQKSPVRIPFMQRPARRVPPPLARPSPEPGSRGRAGAEGTPGARGSRLGLVRMASARSSGSESSDRSGFRRQLTFIKESPGLLRRRRSELSSADSTASTSQAASPRRGRPALPAVFLCSSRCDELRVSPRQPLAAQRSPQAKPGLAPLAPRRTSSESPSRLPVRASPGRPETVKRYASLPHISVSRRSDSAVSVPTTQANATRRGSDGEARPLPRVAPPGTTWRRIKDEDVPHILRSTLPATALPLRVSSPEDSPAGTPQRKTSDAVVQTEDVATSKTNSSTSPSLESRDPPQAPASGPVAPQGSDVDGPVLTKPPASAPFPHEGLSAVIAGFPTSRHGSPSRAARVPPFNYVPSPMAAATMASDSAVEKAPVSSPASLLE</sequence>
<evidence type="ECO:0000250" key="1"/>
<evidence type="ECO:0000250" key="2">
    <source>
        <dbReference type="UniProtKB" id="O95996"/>
    </source>
</evidence>
<evidence type="ECO:0000255" key="3"/>
<evidence type="ECO:0000256" key="4">
    <source>
        <dbReference type="SAM" id="MobiDB-lite"/>
    </source>
</evidence>
<evidence type="ECO:0000269" key="5">
    <source>
    </source>
</evidence>
<evidence type="ECO:0000269" key="6">
    <source>
    </source>
</evidence>
<evidence type="ECO:0000269" key="7">
    <source>
    </source>
</evidence>
<evidence type="ECO:0000305" key="8"/>
<evidence type="ECO:0007744" key="9">
    <source>
    </source>
</evidence>
<accession>Q9Z1K7</accession>
<keyword id="KW-0175">Coiled coil</keyword>
<keyword id="KW-0963">Cytoplasm</keyword>
<keyword id="KW-0206">Cytoskeleton</keyword>
<keyword id="KW-0333">Golgi apparatus</keyword>
<keyword id="KW-0493">Microtubule</keyword>
<keyword id="KW-0597">Phosphoprotein</keyword>
<keyword id="KW-1185">Reference proteome</keyword>
<keyword id="KW-0677">Repeat</keyword>
<keyword id="KW-0879">Wnt signaling pathway</keyword>
<gene>
    <name type="primary">Apc2</name>
</gene>
<feature type="chain" id="PRO_0000313687" description="Adenomatous polyposis coli protein 2">
    <location>
        <begin position="1"/>
        <end position="2274"/>
    </location>
</feature>
<feature type="repeat" description="ARM 1">
    <location>
        <begin position="301"/>
        <end position="341"/>
    </location>
</feature>
<feature type="repeat" description="ARM 2">
    <location>
        <begin position="472"/>
        <end position="511"/>
    </location>
</feature>
<feature type="repeat" description="ARM 3">
    <location>
        <begin position="515"/>
        <end position="555"/>
    </location>
</feature>
<feature type="repeat" description="ARM 4">
    <location>
        <begin position="557"/>
        <end position="602"/>
    </location>
</feature>
<feature type="repeat" description="ARM 5">
    <location>
        <begin position="608"/>
        <end position="647"/>
    </location>
</feature>
<feature type="repeat" description="ARM 6">
    <location>
        <begin position="650"/>
        <end position="689"/>
    </location>
</feature>
<feature type="repeat" description="1">
    <location>
        <begin position="1049"/>
        <end position="1068"/>
    </location>
</feature>
<feature type="repeat" description="2">
    <location>
        <begin position="1140"/>
        <end position="1159"/>
    </location>
</feature>
<feature type="repeat" description="3">
    <location>
        <begin position="1250"/>
        <end position="1269"/>
    </location>
</feature>
<feature type="repeat" description="4">
    <location>
        <begin position="1375"/>
        <end position="1394"/>
    </location>
</feature>
<feature type="repeat" description="5">
    <location>
        <begin position="1546"/>
        <end position="1565"/>
    </location>
</feature>
<feature type="region of interest" description="Disordered" evidence="4">
    <location>
        <begin position="97"/>
        <end position="120"/>
    </location>
</feature>
<feature type="region of interest" description="Disordered" evidence="4">
    <location>
        <begin position="248"/>
        <end position="269"/>
    </location>
</feature>
<feature type="region of interest" description="Disordered" evidence="4">
    <location>
        <begin position="859"/>
        <end position="901"/>
    </location>
</feature>
<feature type="region of interest" description="5 X 20 AA approximate repeat of F-X-V-E-X-T-P-X-C-F-S-R-X-S-S-L-S-S-L-S">
    <location>
        <begin position="1049"/>
        <end position="1565"/>
    </location>
</feature>
<feature type="region of interest" description="Interaction with CTNNB1" evidence="1">
    <location>
        <begin position="1049"/>
        <end position="1565"/>
    </location>
</feature>
<feature type="region of interest" description="Disordered" evidence="4">
    <location>
        <begin position="1061"/>
        <end position="1143"/>
    </location>
</feature>
<feature type="region of interest" description="Disordered" evidence="4">
    <location>
        <begin position="1165"/>
        <end position="1216"/>
    </location>
</feature>
<feature type="region of interest" description="Disordered" evidence="4">
    <location>
        <begin position="1290"/>
        <end position="1323"/>
    </location>
</feature>
<feature type="region of interest" description="Disordered" evidence="4">
    <location>
        <begin position="1368"/>
        <end position="1480"/>
    </location>
</feature>
<feature type="region of interest" description="Disordered" evidence="4">
    <location>
        <begin position="1493"/>
        <end position="1631"/>
    </location>
</feature>
<feature type="region of interest" description="Disordered" evidence="4">
    <location>
        <begin position="1699"/>
        <end position="2003"/>
    </location>
</feature>
<feature type="region of interest" description="Required for localization to microtubules and function in microtubule stabilization" evidence="2">
    <location>
        <begin position="1792"/>
        <end position="1871"/>
    </location>
</feature>
<feature type="region of interest" description="Disordered" evidence="4">
    <location>
        <begin position="2022"/>
        <end position="2122"/>
    </location>
</feature>
<feature type="region of interest" description="Interaction with MAPRE1 and MAPRE3" evidence="1">
    <location>
        <begin position="2037"/>
        <end position="2114"/>
    </location>
</feature>
<feature type="region of interest" description="Disordered" evidence="4">
    <location>
        <begin position="2135"/>
        <end position="2274"/>
    </location>
</feature>
<feature type="coiled-coil region" evidence="3">
    <location>
        <begin position="5"/>
        <end position="59"/>
    </location>
</feature>
<feature type="coiled-coil region" evidence="3">
    <location>
        <begin position="832"/>
        <end position="856"/>
    </location>
</feature>
<feature type="compositionally biased region" description="Low complexity" evidence="4">
    <location>
        <begin position="861"/>
        <end position="870"/>
    </location>
</feature>
<feature type="compositionally biased region" description="Polar residues" evidence="4">
    <location>
        <begin position="1077"/>
        <end position="1086"/>
    </location>
</feature>
<feature type="compositionally biased region" description="Low complexity" evidence="4">
    <location>
        <begin position="1092"/>
        <end position="1103"/>
    </location>
</feature>
<feature type="compositionally biased region" description="Polar residues" evidence="4">
    <location>
        <begin position="1133"/>
        <end position="1143"/>
    </location>
</feature>
<feature type="compositionally biased region" description="Polar residues" evidence="4">
    <location>
        <begin position="1374"/>
        <end position="1397"/>
    </location>
</feature>
<feature type="compositionally biased region" description="Basic and acidic residues" evidence="4">
    <location>
        <begin position="1399"/>
        <end position="1411"/>
    </location>
</feature>
<feature type="compositionally biased region" description="Polar residues" evidence="4">
    <location>
        <begin position="1455"/>
        <end position="1470"/>
    </location>
</feature>
<feature type="compositionally biased region" description="Basic and acidic residues" evidence="4">
    <location>
        <begin position="1517"/>
        <end position="1529"/>
    </location>
</feature>
<feature type="compositionally biased region" description="Low complexity" evidence="4">
    <location>
        <begin position="1556"/>
        <end position="1574"/>
    </location>
</feature>
<feature type="compositionally biased region" description="Basic residues" evidence="4">
    <location>
        <begin position="1608"/>
        <end position="1624"/>
    </location>
</feature>
<feature type="compositionally biased region" description="Low complexity" evidence="4">
    <location>
        <begin position="1780"/>
        <end position="1795"/>
    </location>
</feature>
<feature type="compositionally biased region" description="Low complexity" evidence="4">
    <location>
        <begin position="1839"/>
        <end position="1868"/>
    </location>
</feature>
<feature type="compositionally biased region" description="Pro residues" evidence="4">
    <location>
        <begin position="1910"/>
        <end position="1921"/>
    </location>
</feature>
<feature type="compositionally biased region" description="Low complexity" evidence="4">
    <location>
        <begin position="1945"/>
        <end position="1955"/>
    </location>
</feature>
<feature type="compositionally biased region" description="Low complexity" evidence="4">
    <location>
        <begin position="1983"/>
        <end position="1997"/>
    </location>
</feature>
<feature type="compositionally biased region" description="Polar residues" evidence="4">
    <location>
        <begin position="2165"/>
        <end position="2179"/>
    </location>
</feature>
<feature type="modified residue" description="Phosphoserine" evidence="9">
    <location>
        <position position="1563"/>
    </location>
</feature>
<feature type="modified residue" description="Phosphoserine" evidence="9">
    <location>
        <position position="1565"/>
    </location>
</feature>
<feature type="modified residue" description="Phosphoserine" evidence="9">
    <location>
        <position position="1861"/>
    </location>
</feature>